<comment type="function">
    <text evidence="1">Catalyzes the decarboxylation of orotidine 5'-monophosphate (OMP) to uridine 5'-monophosphate (UMP).</text>
</comment>
<comment type="catalytic activity">
    <reaction evidence="1">
        <text>orotidine 5'-phosphate + H(+) = UMP + CO2</text>
        <dbReference type="Rhea" id="RHEA:11596"/>
        <dbReference type="ChEBI" id="CHEBI:15378"/>
        <dbReference type="ChEBI" id="CHEBI:16526"/>
        <dbReference type="ChEBI" id="CHEBI:57538"/>
        <dbReference type="ChEBI" id="CHEBI:57865"/>
        <dbReference type="EC" id="4.1.1.23"/>
    </reaction>
</comment>
<comment type="pathway">
    <text evidence="1">Pyrimidine metabolism; UMP biosynthesis via de novo pathway; UMP from orotate: step 2/2.</text>
</comment>
<comment type="subunit">
    <text evidence="1">Homodimer.</text>
</comment>
<comment type="similarity">
    <text evidence="1">Belongs to the OMP decarboxylase family. Type 1 subfamily.</text>
</comment>
<organism>
    <name type="scientific">Bacillus cereus (strain B4264)</name>
    <dbReference type="NCBI Taxonomy" id="405532"/>
    <lineage>
        <taxon>Bacteria</taxon>
        <taxon>Bacillati</taxon>
        <taxon>Bacillota</taxon>
        <taxon>Bacilli</taxon>
        <taxon>Bacillales</taxon>
        <taxon>Bacillaceae</taxon>
        <taxon>Bacillus</taxon>
        <taxon>Bacillus cereus group</taxon>
    </lineage>
</organism>
<name>PYRF_BACC4</name>
<feature type="chain" id="PRO_1000138513" description="Orotidine 5'-phosphate decarboxylase">
    <location>
        <begin position="1"/>
        <end position="238"/>
    </location>
</feature>
<feature type="active site" description="Proton donor" evidence="1">
    <location>
        <position position="61"/>
    </location>
</feature>
<feature type="binding site" evidence="1">
    <location>
        <position position="10"/>
    </location>
    <ligand>
        <name>substrate</name>
    </ligand>
</feature>
<feature type="binding site" evidence="1">
    <location>
        <position position="32"/>
    </location>
    <ligand>
        <name>substrate</name>
    </ligand>
</feature>
<feature type="binding site" evidence="1">
    <location>
        <begin position="59"/>
        <end position="68"/>
    </location>
    <ligand>
        <name>substrate</name>
    </ligand>
</feature>
<feature type="binding site" evidence="1">
    <location>
        <position position="122"/>
    </location>
    <ligand>
        <name>substrate</name>
    </ligand>
</feature>
<feature type="binding site" evidence="1">
    <location>
        <position position="184"/>
    </location>
    <ligand>
        <name>substrate</name>
    </ligand>
</feature>
<feature type="binding site" evidence="1">
    <location>
        <position position="193"/>
    </location>
    <ligand>
        <name>substrate</name>
    </ligand>
</feature>
<feature type="binding site" evidence="1">
    <location>
        <position position="213"/>
    </location>
    <ligand>
        <name>substrate</name>
    </ligand>
</feature>
<feature type="binding site" evidence="1">
    <location>
        <position position="214"/>
    </location>
    <ligand>
        <name>substrate</name>
    </ligand>
</feature>
<evidence type="ECO:0000255" key="1">
    <source>
        <dbReference type="HAMAP-Rule" id="MF_01200"/>
    </source>
</evidence>
<keyword id="KW-0210">Decarboxylase</keyword>
<keyword id="KW-0456">Lyase</keyword>
<keyword id="KW-0665">Pyrimidine biosynthesis</keyword>
<protein>
    <recommendedName>
        <fullName evidence="1">Orotidine 5'-phosphate decarboxylase</fullName>
        <ecNumber evidence="1">4.1.1.23</ecNumber>
    </recommendedName>
    <alternativeName>
        <fullName evidence="1">OMP decarboxylase</fullName>
        <shortName evidence="1">OMPDCase</shortName>
        <shortName evidence="1">OMPdecase</shortName>
    </alternativeName>
</protein>
<sequence>MSQSLIVALDFPGKQEVEQFLHHFEGEELFVKVGMELFYKEGPAIITYLKEKGHKIFLDLKLHDIPNTVKSAMRSLASLDVDMVNVHAAGGSSMMKAAIEGLEEGKQEGKERPICIAVTQLTSTSEAMMKKEIGIEKTLEEAVAHYAKLTKESGLDGVVCSTLEVPKLREVCGNEFVTVTPGIRLASDDVNDQVRVATPKRARELGSSYIVVGRSITKAENPLEAYKTVKQQWEGVTV</sequence>
<proteinExistence type="inferred from homology"/>
<accession>B7H6L9</accession>
<dbReference type="EC" id="4.1.1.23" evidence="1"/>
<dbReference type="EMBL" id="CP001176">
    <property type="protein sequence ID" value="ACK62795.1"/>
    <property type="molecule type" value="Genomic_DNA"/>
</dbReference>
<dbReference type="RefSeq" id="WP_000083510.1">
    <property type="nucleotide sequence ID" value="NZ_VEHB01000002.1"/>
</dbReference>
<dbReference type="SMR" id="B7H6L9"/>
<dbReference type="KEGG" id="bcb:BCB4264_A3981"/>
<dbReference type="HOGENOM" id="CLU_067069_1_1_9"/>
<dbReference type="UniPathway" id="UPA00070">
    <property type="reaction ID" value="UER00120"/>
</dbReference>
<dbReference type="Proteomes" id="UP000007096">
    <property type="component" value="Chromosome"/>
</dbReference>
<dbReference type="GO" id="GO:0005829">
    <property type="term" value="C:cytosol"/>
    <property type="evidence" value="ECO:0007669"/>
    <property type="project" value="TreeGrafter"/>
</dbReference>
<dbReference type="GO" id="GO:0004590">
    <property type="term" value="F:orotidine-5'-phosphate decarboxylase activity"/>
    <property type="evidence" value="ECO:0007669"/>
    <property type="project" value="UniProtKB-UniRule"/>
</dbReference>
<dbReference type="GO" id="GO:0006207">
    <property type="term" value="P:'de novo' pyrimidine nucleobase biosynthetic process"/>
    <property type="evidence" value="ECO:0007669"/>
    <property type="project" value="InterPro"/>
</dbReference>
<dbReference type="GO" id="GO:0044205">
    <property type="term" value="P:'de novo' UMP biosynthetic process"/>
    <property type="evidence" value="ECO:0007669"/>
    <property type="project" value="UniProtKB-UniRule"/>
</dbReference>
<dbReference type="CDD" id="cd04725">
    <property type="entry name" value="OMP_decarboxylase_like"/>
    <property type="match status" value="1"/>
</dbReference>
<dbReference type="FunFam" id="3.20.20.70:FF:000015">
    <property type="entry name" value="Orotidine 5'-phosphate decarboxylase"/>
    <property type="match status" value="1"/>
</dbReference>
<dbReference type="Gene3D" id="3.20.20.70">
    <property type="entry name" value="Aldolase class I"/>
    <property type="match status" value="1"/>
</dbReference>
<dbReference type="HAMAP" id="MF_01200_B">
    <property type="entry name" value="OMPdecase_type1_B"/>
    <property type="match status" value="1"/>
</dbReference>
<dbReference type="InterPro" id="IPR013785">
    <property type="entry name" value="Aldolase_TIM"/>
</dbReference>
<dbReference type="InterPro" id="IPR014732">
    <property type="entry name" value="OMPdecase"/>
</dbReference>
<dbReference type="InterPro" id="IPR018089">
    <property type="entry name" value="OMPdecase_AS"/>
</dbReference>
<dbReference type="InterPro" id="IPR047596">
    <property type="entry name" value="OMPdecase_bac"/>
</dbReference>
<dbReference type="InterPro" id="IPR001754">
    <property type="entry name" value="OMPdeCOase_dom"/>
</dbReference>
<dbReference type="InterPro" id="IPR011060">
    <property type="entry name" value="RibuloseP-bd_barrel"/>
</dbReference>
<dbReference type="NCBIfam" id="NF001273">
    <property type="entry name" value="PRK00230.1"/>
    <property type="match status" value="1"/>
</dbReference>
<dbReference type="NCBIfam" id="TIGR01740">
    <property type="entry name" value="pyrF"/>
    <property type="match status" value="1"/>
</dbReference>
<dbReference type="PANTHER" id="PTHR32119">
    <property type="entry name" value="OROTIDINE 5'-PHOSPHATE DECARBOXYLASE"/>
    <property type="match status" value="1"/>
</dbReference>
<dbReference type="PANTHER" id="PTHR32119:SF2">
    <property type="entry name" value="OROTIDINE 5'-PHOSPHATE DECARBOXYLASE"/>
    <property type="match status" value="1"/>
</dbReference>
<dbReference type="Pfam" id="PF00215">
    <property type="entry name" value="OMPdecase"/>
    <property type="match status" value="1"/>
</dbReference>
<dbReference type="SMART" id="SM00934">
    <property type="entry name" value="OMPdecase"/>
    <property type="match status" value="1"/>
</dbReference>
<dbReference type="SUPFAM" id="SSF51366">
    <property type="entry name" value="Ribulose-phoshate binding barrel"/>
    <property type="match status" value="1"/>
</dbReference>
<dbReference type="PROSITE" id="PS00156">
    <property type="entry name" value="OMPDECASE"/>
    <property type="match status" value="1"/>
</dbReference>
<reference key="1">
    <citation type="submission" date="2008-10" db="EMBL/GenBank/DDBJ databases">
        <title>Genome sequence of Bacillus cereus B4264.</title>
        <authorList>
            <person name="Dodson R.J."/>
            <person name="Durkin A.S."/>
            <person name="Rosovitz M.J."/>
            <person name="Rasko D.A."/>
            <person name="Hoffmaster A."/>
            <person name="Ravel J."/>
            <person name="Sutton G."/>
        </authorList>
    </citation>
    <scope>NUCLEOTIDE SEQUENCE [LARGE SCALE GENOMIC DNA]</scope>
    <source>
        <strain>B4264</strain>
    </source>
</reference>
<gene>
    <name evidence="1" type="primary">pyrF</name>
    <name type="ordered locus">BCB4264_A3981</name>
</gene>